<evidence type="ECO:0000250" key="1">
    <source>
        <dbReference type="UniProtKB" id="P09147"/>
    </source>
</evidence>
<evidence type="ECO:0000250" key="2">
    <source>
        <dbReference type="UniProtKB" id="Q8KN66"/>
    </source>
</evidence>
<evidence type="ECO:0000269" key="3">
    <source>
    </source>
</evidence>
<evidence type="ECO:0000269" key="4">
    <source>
    </source>
</evidence>
<evidence type="ECO:0000303" key="5">
    <source>
    </source>
</evidence>
<evidence type="ECO:0000303" key="6">
    <source>
    </source>
</evidence>
<evidence type="ECO:0000303" key="7">
    <source>
    </source>
</evidence>
<evidence type="ECO:0000305" key="8"/>
<evidence type="ECO:0000305" key="9">
    <source>
    </source>
</evidence>
<evidence type="ECO:0000305" key="10">
    <source>
    </source>
</evidence>
<evidence type="ECO:0000312" key="11">
    <source>
        <dbReference type="EMBL" id="AAO71804.1"/>
    </source>
</evidence>
<evidence type="ECO:0000312" key="12">
    <source>
        <dbReference type="EMBL" id="BAA03193.1"/>
    </source>
</evidence>
<evidence type="ECO:0000312" key="13">
    <source>
        <dbReference type="EMBL" id="CAA47992.1"/>
    </source>
</evidence>
<evidence type="ECO:0000312" key="14">
    <source>
        <dbReference type="EMBL" id="CAD06780.1"/>
    </source>
</evidence>
<reference evidence="13" key="1">
    <citation type="journal article" date="1993" name="Res. Microbiol.">
        <title>Identification of six open reading frames in the Salmonella enterica subsp. enterica ser. Typhi viaB locus involved in Vi antigen production.</title>
        <authorList>
            <person name="Waxin H."/>
            <person name="Virlogeux I."/>
            <person name="Kolyva S."/>
            <person name="Popoff M.Y."/>
        </authorList>
    </citation>
    <scope>NUCLEOTIDE SEQUENCE [GENOMIC DNA]</scope>
    <source>
        <strain>ATCC 700931 / Ty2</strain>
    </source>
</reference>
<reference evidence="12" key="2">
    <citation type="journal article" date="1993" name="J. Bacteriol.">
        <title>Complete nucleotide sequence and molecular characterization of ViaB region encoding Vi antigen in Salmonella typhi.</title>
        <authorList>
            <person name="Hashimoto Y."/>
            <person name="Li N."/>
            <person name="Yokoyama H."/>
            <person name="Ezaki T."/>
        </authorList>
    </citation>
    <scope>NUCLEOTIDE SEQUENCE [GENOMIC DNA]</scope>
    <scope>FUNCTION</scope>
    <scope>PATHWAY</scope>
    <scope>DISRUPTION PHENOTYPE</scope>
    <source>
        <strain>GIFU 10007</strain>
    </source>
</reference>
<reference evidence="14" key="3">
    <citation type="journal article" date="2001" name="Nature">
        <title>Complete genome sequence of a multiple drug resistant Salmonella enterica serovar Typhi CT18.</title>
        <authorList>
            <person name="Parkhill J."/>
            <person name="Dougan G."/>
            <person name="James K.D."/>
            <person name="Thomson N.R."/>
            <person name="Pickard D."/>
            <person name="Wain J."/>
            <person name="Churcher C.M."/>
            <person name="Mungall K.L."/>
            <person name="Bentley S.D."/>
            <person name="Holden M.T.G."/>
            <person name="Sebaihia M."/>
            <person name="Baker S."/>
            <person name="Basham D."/>
            <person name="Brooks K."/>
            <person name="Chillingworth T."/>
            <person name="Connerton P."/>
            <person name="Cronin A."/>
            <person name="Davis P."/>
            <person name="Davies R.M."/>
            <person name="Dowd L."/>
            <person name="White N."/>
            <person name="Farrar J."/>
            <person name="Feltwell T."/>
            <person name="Hamlin N."/>
            <person name="Haque A."/>
            <person name="Hien T.T."/>
            <person name="Holroyd S."/>
            <person name="Jagels K."/>
            <person name="Krogh A."/>
            <person name="Larsen T.S."/>
            <person name="Leather S."/>
            <person name="Moule S."/>
            <person name="O'Gaora P."/>
            <person name="Parry C."/>
            <person name="Quail M.A."/>
            <person name="Rutherford K.M."/>
            <person name="Simmonds M."/>
            <person name="Skelton J."/>
            <person name="Stevens K."/>
            <person name="Whitehead S."/>
            <person name="Barrell B.G."/>
        </authorList>
    </citation>
    <scope>NUCLEOTIDE SEQUENCE [LARGE SCALE GENOMIC DNA]</scope>
    <source>
        <strain>CT18</strain>
    </source>
</reference>
<reference evidence="11" key="4">
    <citation type="journal article" date="2003" name="J. Bacteriol.">
        <title>Comparative genomics of Salmonella enterica serovar Typhi strains Ty2 and CT18.</title>
        <authorList>
            <person name="Deng W."/>
            <person name="Liou S.-R."/>
            <person name="Plunkett G. III"/>
            <person name="Mayhew G.F."/>
            <person name="Rose D.J."/>
            <person name="Burland V."/>
            <person name="Kodoyianni V."/>
            <person name="Schwartz D.C."/>
            <person name="Blattner F.R."/>
        </authorList>
    </citation>
    <scope>NUCLEOTIDE SEQUENCE [LARGE SCALE GENOMIC DNA]</scope>
    <source>
        <strain>ATCC 700931 / Ty2</strain>
    </source>
</reference>
<reference key="5">
    <citation type="journal article" date="2006" name="Biochemistry">
        <title>Vi antigen biosynthesis in Salmonella typhi: characterization of UDP-N-acetylglucosamine C-6 dehydrogenase (TviB) and UDP-N-acetylglucosaminuronic acid C-4 epimerase (TviC).</title>
        <authorList>
            <person name="Zhang H."/>
            <person name="Zhou Y."/>
            <person name="Bao H."/>
            <person name="Liu H.W."/>
        </authorList>
    </citation>
    <scope>FUNCTION</scope>
    <scope>CATALYTIC ACTIVITY</scope>
    <scope>COFACTOR</scope>
    <scope>BIOPHYSICOCHEMICAL PROPERTIES</scope>
    <scope>SUBUNIT</scope>
    <source>
        <strain>ATCC 700931 / Ty2</strain>
    </source>
</reference>
<proteinExistence type="evidence at protein level"/>
<keyword id="KW-0972">Capsule biogenesis/degradation</keyword>
<keyword id="KW-0413">Isomerase</keyword>
<keyword id="KW-0520">NAD</keyword>
<keyword id="KW-0547">Nucleotide-binding</keyword>
<gene>
    <name evidence="12 13" type="primary">wcdB</name>
    <name evidence="6" type="synonym">tviC</name>
    <name evidence="7" type="synonym">vipB</name>
    <name evidence="14" type="ordered locus">STY4660</name>
    <name evidence="11" type="ordered locus">t4351</name>
</gene>
<organism>
    <name type="scientific">Salmonella typhi</name>
    <dbReference type="NCBI Taxonomy" id="90370"/>
    <lineage>
        <taxon>Bacteria</taxon>
        <taxon>Pseudomonadati</taxon>
        <taxon>Pseudomonadota</taxon>
        <taxon>Gammaproteobacteria</taxon>
        <taxon>Enterobacterales</taxon>
        <taxon>Enterobacteriaceae</taxon>
        <taxon>Salmonella</taxon>
    </lineage>
</organism>
<sequence>MTAYEELRTKLVLAPKRWLITGVAGFIGSGLLEELLFLNQTVIGLDNFSTGYQHNLDDVRTSVSEEQWSRFIFIQGDIRKFTDCQKACKNVDYVLHQAALGSVPRSLKDPIATNSANIDGFLNMLTAARDAHVSSFTYAASSSTYGDHPDLPKIEERIGRPLSPYAVTKYVNELYADVFARSYEFNAIGLRYFNVFGRRQNPNGAYSAVIPRWILSLLKDEPIYINGDGSTSRDFCYIENVIQANLLSATTNDLASKNKVYNVAVGDRTSLNELYYLIRDGLNLWRNEQSRAEPIYKDFRDGDVKHSQADITKIKTFLSYEPEFDIKEGLKQTLKWYIDKHSTLYSSV</sequence>
<dbReference type="EC" id="5.1.3.45" evidence="3"/>
<dbReference type="EC" id="5.1.3.7" evidence="3"/>
<dbReference type="EMBL" id="X67785">
    <property type="protein sequence ID" value="CAA47992.1"/>
    <property type="molecule type" value="Genomic_DNA"/>
</dbReference>
<dbReference type="EMBL" id="D14156">
    <property type="protein sequence ID" value="BAA03193.1"/>
    <property type="molecule type" value="Genomic_DNA"/>
</dbReference>
<dbReference type="EMBL" id="AL513382">
    <property type="protein sequence ID" value="CAD06780.1"/>
    <property type="molecule type" value="Genomic_DNA"/>
</dbReference>
<dbReference type="EMBL" id="AE014613">
    <property type="protein sequence ID" value="AAO71804.1"/>
    <property type="molecule type" value="Genomic_DNA"/>
</dbReference>
<dbReference type="PIR" id="C36892">
    <property type="entry name" value="C36892"/>
</dbReference>
<dbReference type="RefSeq" id="NP_458739.1">
    <property type="nucleotide sequence ID" value="NC_003198.1"/>
</dbReference>
<dbReference type="RefSeq" id="WP_000127915.1">
    <property type="nucleotide sequence ID" value="NZ_WSUR01000012.1"/>
</dbReference>
<dbReference type="SMR" id="Q04973"/>
<dbReference type="STRING" id="220341.gene:17588477"/>
<dbReference type="KEGG" id="stt:t4351"/>
<dbReference type="KEGG" id="sty:STY4660"/>
<dbReference type="PATRIC" id="fig|220341.7.peg.4759"/>
<dbReference type="eggNOG" id="COG0451">
    <property type="taxonomic scope" value="Bacteria"/>
</dbReference>
<dbReference type="HOGENOM" id="CLU_007383_1_7_6"/>
<dbReference type="OMA" id="GPRMPRD"/>
<dbReference type="OrthoDB" id="9803010at2"/>
<dbReference type="UniPathway" id="UPA00811"/>
<dbReference type="UniPathway" id="UPA00934"/>
<dbReference type="Proteomes" id="UP000000541">
    <property type="component" value="Chromosome"/>
</dbReference>
<dbReference type="Proteomes" id="UP000002670">
    <property type="component" value="Chromosome"/>
</dbReference>
<dbReference type="GO" id="GO:0016853">
    <property type="term" value="F:isomerase activity"/>
    <property type="evidence" value="ECO:0007669"/>
    <property type="project" value="UniProtKB-KW"/>
</dbReference>
<dbReference type="GO" id="GO:0000166">
    <property type="term" value="F:nucleotide binding"/>
    <property type="evidence" value="ECO:0007669"/>
    <property type="project" value="UniProtKB-KW"/>
</dbReference>
<dbReference type="GO" id="GO:0045227">
    <property type="term" value="P:capsule polysaccharide biosynthetic process"/>
    <property type="evidence" value="ECO:0007669"/>
    <property type="project" value="UniProtKB-UniPathway"/>
</dbReference>
<dbReference type="CDD" id="cd05256">
    <property type="entry name" value="UDP_AE_SDR_e"/>
    <property type="match status" value="1"/>
</dbReference>
<dbReference type="Gene3D" id="3.40.50.720">
    <property type="entry name" value="NAD(P)-binding Rossmann-like Domain"/>
    <property type="match status" value="1"/>
</dbReference>
<dbReference type="Gene3D" id="3.90.25.10">
    <property type="entry name" value="UDP-galactose 4-epimerase, domain 1"/>
    <property type="match status" value="1"/>
</dbReference>
<dbReference type="InterPro" id="IPR001509">
    <property type="entry name" value="Epimerase_deHydtase"/>
</dbReference>
<dbReference type="InterPro" id="IPR050177">
    <property type="entry name" value="Lipid_A_modif_metabolic_enz"/>
</dbReference>
<dbReference type="InterPro" id="IPR036291">
    <property type="entry name" value="NAD(P)-bd_dom_sf"/>
</dbReference>
<dbReference type="NCBIfam" id="NF011728">
    <property type="entry name" value="PRK15181.1"/>
    <property type="match status" value="1"/>
</dbReference>
<dbReference type="PANTHER" id="PTHR43245">
    <property type="entry name" value="BIFUNCTIONAL POLYMYXIN RESISTANCE PROTEIN ARNA"/>
    <property type="match status" value="1"/>
</dbReference>
<dbReference type="PANTHER" id="PTHR43245:SF13">
    <property type="entry name" value="UDP-D-APIOSE_UDP-D-XYLOSE SYNTHASE 2"/>
    <property type="match status" value="1"/>
</dbReference>
<dbReference type="Pfam" id="PF01370">
    <property type="entry name" value="Epimerase"/>
    <property type="match status" value="1"/>
</dbReference>
<dbReference type="PRINTS" id="PR01713">
    <property type="entry name" value="NUCEPIMERASE"/>
</dbReference>
<dbReference type="SUPFAM" id="SSF51735">
    <property type="entry name" value="NAD(P)-binding Rossmann-fold domains"/>
    <property type="match status" value="1"/>
</dbReference>
<name>WCDB_SALTI</name>
<comment type="function">
    <text evidence="3 4">Epimerase required for the biosynthesis of the capsular polysaccharide, commonly referred as the Vi antigen, an important virulence factor (PubMed:8331073). Catalyzes the reversible epimerization of UDP-N-acetylglucosaminuronic acid (UDP-GlcNAcA) to UDP-N-acetylgalactosaminuronic acid (UDP-GalNAcA) (PubMed:16800641). Also catalyzes, with lower efficiency, the reversible epimerization of UDP-N-acetylglucosamine (UDP-GlcNAc) to UDP-N-acetylgalactosamine (UDP-GalNAc) (PubMed:16800641). Cannot use UDP-glucose (UDP-Glc) and UDP-galactose (UDP-Gal) as substrates (PubMed:16800641).</text>
</comment>
<comment type="catalytic activity">
    <reaction evidence="3">
        <text>UDP-2-acetamido-2-deoxy-alpha-D-glucuronate = UDP-2-acetamido-2-deoxy-alpha-D-galacturonate</text>
        <dbReference type="Rhea" id="RHEA:81511"/>
        <dbReference type="ChEBI" id="CHEBI:65040"/>
        <dbReference type="ChEBI" id="CHEBI:231899"/>
        <dbReference type="EC" id="5.1.3.45"/>
    </reaction>
    <physiologicalReaction direction="left-to-right" evidence="3">
        <dbReference type="Rhea" id="RHEA:81512"/>
    </physiologicalReaction>
</comment>
<comment type="catalytic activity">
    <reaction evidence="3">
        <text>UDP-N-acetyl-alpha-D-glucosamine = UDP-N-acetyl-alpha-D-galactosamine</text>
        <dbReference type="Rhea" id="RHEA:20517"/>
        <dbReference type="ChEBI" id="CHEBI:57705"/>
        <dbReference type="ChEBI" id="CHEBI:67138"/>
        <dbReference type="EC" id="5.1.3.7"/>
    </reaction>
</comment>
<comment type="cofactor">
    <cofactor evidence="3">
        <name>NAD(+)</name>
        <dbReference type="ChEBI" id="CHEBI:57540"/>
    </cofactor>
</comment>
<comment type="biophysicochemical properties">
    <kinetics>
        <KM evidence="3">20 uM for UDP-GlcNAcA</KM>
        <KM evidence="3">42 uM for UDP-GalNAcA</KM>
        <KM evidence="3">51 uM for UDP-GlcNAc</KM>
        <KM evidence="3">71 uM for UDP-GalNAc</KM>
        <text evidence="3">kcat is 56.8 min(-1) with UDP-GlcNAcA as substrate. kcat is 39.1 min(-1) with UDP-GalNAcA as substrate. kcat is 14.2 min(-1) with UDP-GlcNAc as substrate. kcat is 52.6 min(-1) with UDP-GalNAc as substrate.</text>
    </kinetics>
    <phDependence>
        <text evidence="3">Optimum pH is 8.8 (with UDP-GlcNAcA or UDP-GalNAcA as substrate).</text>
    </phDependence>
</comment>
<comment type="pathway">
    <text evidence="4 9 10">Capsule biogenesis; capsule polysaccharide biosynthesis.</text>
</comment>
<comment type="pathway">
    <text evidence="4 9 10">Glycan metabolism; Vi-antigen biosynthesis.</text>
</comment>
<comment type="subunit">
    <text evidence="3">Homodimer.</text>
</comment>
<comment type="disruption phenotype">
    <text evidence="4">The disruption mutant cannot synthesize the Vi polysaccharide.</text>
</comment>
<comment type="similarity">
    <text evidence="8">Belongs to the NAD(P)-dependent epimerase/dehydratase family.</text>
</comment>
<accession>Q04973</accession>
<protein>
    <recommendedName>
        <fullName evidence="8">UDP-N-acetyl-alpha-D-glucosaminouronate 4-epimerase</fullName>
        <shortName evidence="5">UDP-GlcNAcA 4-epimerase</shortName>
        <ecNumber evidence="3">5.1.3.45</ecNumber>
    </recommendedName>
    <alternativeName>
        <fullName evidence="8">UDP-N-acetylglucosamine C4 epimerase</fullName>
        <shortName evidence="8">UDP-GlcNAc C4 epimerase</shortName>
        <ecNumber evidence="3">5.1.3.7</ecNumber>
    </alternativeName>
    <alternativeName>
        <fullName evidence="8">Vi polysaccharide biosynthesis protein VipB/TviC</fullName>
    </alternativeName>
    <alternativeName>
        <fullName evidence="7">Vi polysaccharide synthesis gene B</fullName>
    </alternativeName>
</protein>
<feature type="chain" id="PRO_0000183256" description="UDP-N-acetyl-alpha-D-glucosaminouronate 4-epimerase">
    <location>
        <begin position="1"/>
        <end position="348"/>
    </location>
</feature>
<feature type="active site" description="Proton acceptor" evidence="1">
    <location>
        <position position="165"/>
    </location>
</feature>
<feature type="binding site" evidence="2">
    <location>
        <position position="26"/>
    </location>
    <ligand>
        <name>NAD(+)</name>
        <dbReference type="ChEBI" id="CHEBI:57540"/>
    </ligand>
</feature>
<feature type="binding site" evidence="2">
    <location>
        <position position="27"/>
    </location>
    <ligand>
        <name>NAD(+)</name>
        <dbReference type="ChEBI" id="CHEBI:57540"/>
    </ligand>
</feature>
<feature type="binding site" evidence="2">
    <location>
        <position position="46"/>
    </location>
    <ligand>
        <name>NAD(+)</name>
        <dbReference type="ChEBI" id="CHEBI:57540"/>
    </ligand>
</feature>
<feature type="binding site" evidence="2">
    <location>
        <position position="50"/>
    </location>
    <ligand>
        <name>NAD(+)</name>
        <dbReference type="ChEBI" id="CHEBI:57540"/>
    </ligand>
</feature>
<feature type="binding site" evidence="2">
    <location>
        <position position="51"/>
    </location>
    <ligand>
        <name>NAD(+)</name>
        <dbReference type="ChEBI" id="CHEBI:57540"/>
    </ligand>
</feature>
<feature type="binding site" evidence="2">
    <location>
        <position position="77"/>
    </location>
    <ligand>
        <name>NAD(+)</name>
        <dbReference type="ChEBI" id="CHEBI:57540"/>
    </ligand>
</feature>
<feature type="binding site" evidence="2">
    <location>
        <position position="78"/>
    </location>
    <ligand>
        <name>NAD(+)</name>
        <dbReference type="ChEBI" id="CHEBI:57540"/>
    </ligand>
</feature>
<feature type="binding site" evidence="2">
    <location>
        <position position="97"/>
    </location>
    <ligand>
        <name>NAD(+)</name>
        <dbReference type="ChEBI" id="CHEBI:57540"/>
    </ligand>
</feature>
<feature type="binding site" evidence="2">
    <location>
        <position position="165"/>
    </location>
    <ligand>
        <name>NAD(+)</name>
        <dbReference type="ChEBI" id="CHEBI:57540"/>
    </ligand>
</feature>
<feature type="binding site" evidence="2">
    <location>
        <position position="169"/>
    </location>
    <ligand>
        <name>NAD(+)</name>
        <dbReference type="ChEBI" id="CHEBI:57540"/>
    </ligand>
</feature>
<feature type="binding site" evidence="2">
    <location>
        <position position="195"/>
    </location>
    <ligand>
        <name>NAD(+)</name>
        <dbReference type="ChEBI" id="CHEBI:57540"/>
    </ligand>
</feature>